<keyword id="KW-0106">Calcium</keyword>
<keyword id="KW-0119">Carbohydrate metabolism</keyword>
<keyword id="KW-0903">Direct protein sequencing</keyword>
<keyword id="KW-1015">Disulfide bond</keyword>
<keyword id="KW-0325">Glycoprotein</keyword>
<keyword id="KW-0326">Glycosidase</keyword>
<keyword id="KW-0378">Hydrolase</keyword>
<keyword id="KW-0479">Metal-binding</keyword>
<keyword id="KW-0964">Secreted</keyword>
<keyword id="KW-0732">Signal</keyword>
<dbReference type="EC" id="3.2.1.1" evidence="5 6"/>
<dbReference type="EMBL" id="U30376">
    <property type="protein sequence ID" value="AAC49622.1"/>
    <property type="status" value="ALT_INIT"/>
    <property type="molecule type" value="mRNA"/>
</dbReference>
<dbReference type="PIR" id="JC4510">
    <property type="entry name" value="JC4510"/>
</dbReference>
<dbReference type="SMR" id="Q01117"/>
<dbReference type="CAZy" id="CBM21">
    <property type="family name" value="Carbohydrate-Binding Module Family 21"/>
</dbReference>
<dbReference type="CAZy" id="GH13">
    <property type="family name" value="Glycoside Hydrolase Family 13"/>
</dbReference>
<dbReference type="GlyCosmos" id="Q01117">
    <property type="glycosylation" value="2 sites, No reported glycans"/>
</dbReference>
<dbReference type="GO" id="GO:0005576">
    <property type="term" value="C:extracellular region"/>
    <property type="evidence" value="ECO:0007669"/>
    <property type="project" value="UniProtKB-SubCell"/>
</dbReference>
<dbReference type="GO" id="GO:0004556">
    <property type="term" value="F:alpha-amylase activity"/>
    <property type="evidence" value="ECO:0007669"/>
    <property type="project" value="UniProtKB-EC"/>
</dbReference>
<dbReference type="GO" id="GO:0005509">
    <property type="term" value="F:calcium ion binding"/>
    <property type="evidence" value="ECO:0007669"/>
    <property type="project" value="InterPro"/>
</dbReference>
<dbReference type="GO" id="GO:0016052">
    <property type="term" value="P:carbohydrate catabolic process"/>
    <property type="evidence" value="ECO:0007669"/>
    <property type="project" value="InterPro"/>
</dbReference>
<dbReference type="CDD" id="cd11319">
    <property type="entry name" value="AmyAc_euk_AmyA"/>
    <property type="match status" value="1"/>
</dbReference>
<dbReference type="FunFam" id="2.60.40.1180:FF:000037">
    <property type="entry name" value="Alpha-amylase A"/>
    <property type="match status" value="1"/>
</dbReference>
<dbReference type="FunFam" id="3.20.20.80:FF:000120">
    <property type="entry name" value="Alpha-amylase A"/>
    <property type="match status" value="1"/>
</dbReference>
<dbReference type="Gene3D" id="3.20.20.80">
    <property type="entry name" value="Glycosidases"/>
    <property type="match status" value="1"/>
</dbReference>
<dbReference type="Gene3D" id="2.60.40.1180">
    <property type="entry name" value="Golgi alpha-mannosidase II"/>
    <property type="match status" value="1"/>
</dbReference>
<dbReference type="InterPro" id="IPR013777">
    <property type="entry name" value="A-amylase-like"/>
</dbReference>
<dbReference type="InterPro" id="IPR015340">
    <property type="entry name" value="A_amylase_C_dom"/>
</dbReference>
<dbReference type="InterPro" id="IPR005036">
    <property type="entry name" value="CBM21_dom"/>
</dbReference>
<dbReference type="InterPro" id="IPR006047">
    <property type="entry name" value="Glyco_hydro_13_cat_dom"/>
</dbReference>
<dbReference type="InterPro" id="IPR013780">
    <property type="entry name" value="Glyco_hydro_b"/>
</dbReference>
<dbReference type="InterPro" id="IPR017853">
    <property type="entry name" value="Glycoside_hydrolase_SF"/>
</dbReference>
<dbReference type="PANTHER" id="PTHR10357:SF215">
    <property type="entry name" value="ALPHA-AMYLASE 1"/>
    <property type="match status" value="1"/>
</dbReference>
<dbReference type="PANTHER" id="PTHR10357">
    <property type="entry name" value="ALPHA-AMYLASE FAMILY MEMBER"/>
    <property type="match status" value="1"/>
</dbReference>
<dbReference type="Pfam" id="PF09260">
    <property type="entry name" value="A_amylase_dom_C"/>
    <property type="match status" value="1"/>
</dbReference>
<dbReference type="Pfam" id="PF00128">
    <property type="entry name" value="Alpha-amylase"/>
    <property type="match status" value="1"/>
</dbReference>
<dbReference type="PIRSF" id="PIRSF001024">
    <property type="entry name" value="Alph-amyl_fung"/>
    <property type="match status" value="1"/>
</dbReference>
<dbReference type="SMART" id="SM00642">
    <property type="entry name" value="Aamy"/>
    <property type="match status" value="1"/>
</dbReference>
<dbReference type="SUPFAM" id="SSF51445">
    <property type="entry name" value="(Trans)glycosidases"/>
    <property type="match status" value="1"/>
</dbReference>
<dbReference type="SUPFAM" id="SSF51011">
    <property type="entry name" value="Glycosyl hydrolase domain"/>
    <property type="match status" value="1"/>
</dbReference>
<dbReference type="PROSITE" id="PS51159">
    <property type="entry name" value="CBM21"/>
    <property type="match status" value="1"/>
</dbReference>
<comment type="catalytic activity">
    <reaction evidence="5 6">
        <text>Endohydrolysis of (1-&gt;4)-alpha-D-glucosidic linkages in polysaccharides containing three or more (1-&gt;4)-alpha-linked D-glucose units.</text>
        <dbReference type="EC" id="3.2.1.1"/>
    </reaction>
</comment>
<comment type="cofactor">
    <cofactor evidence="1">
        <name>Ca(2+)</name>
        <dbReference type="ChEBI" id="CHEBI:29108"/>
    </cofactor>
    <text evidence="1">Binds 2 calcium ions per subunit. Calcium is inhibitory at high concentrations.</text>
</comment>
<comment type="subcellular location">
    <subcellularLocation>
        <location evidence="5 6">Secreted</location>
    </subcellularLocation>
</comment>
<comment type="similarity">
    <text evidence="7">Belongs to the glycosyl hydrolase 13 family.</text>
</comment>
<comment type="sequence caution" evidence="7">
    <conflict type="erroneous initiation">
        <sequence resource="EMBL-CDS" id="AAC49622"/>
    </conflict>
    <text>Truncated N-terminus.</text>
</comment>
<sequence>MLLINFFIAVLGVISLSPIVVARYILRRDCTTVTVLSSPESVTGSNHVQLASYEMCGSTLSASLYVYNDDYDKIVTLYYLTSSGTTGSTLALILPVWSNNWELWTLSAIAAGAVEITGASYVDSDTSVTYTTSLDLPLTTTSASVPTGTAANWRGRSIYQVVTDRFARTDGSITYSCDVTDRVYCGGSYRGIINMLDYIQGMGFTAIWISPIVENIPDDTGYGYAYHGYWMKDIFALNTNFGGADDLIALATELHNRGMYLMVDIVVNHFAFSGNHADVDYSEYFPYSSQDYFHSFCWITDYSNQTNVEECWLGDDSVPLVDVNTQLDTVKSEYQSWVKQLIANYSIDGLRIDTVKHVQMDFWAPFQEAAGIYTVGEVFDGDPSYTCPYQENLDGVLNYPVYYPVVSAFQRVGGSISSLVDMIDTLKSECIDTTLLGSFLENQDNPRFPSYTSDESLIKNAIAFTILSDGIPIIYYGQEQGLNGGNDPYNREALWPTGYSTTSTFYEYIASLNQIRNHAIYIDDTYLTYQNWVIYSDSTTIAMRKGFTGNQIITVLSNLGSSGSSYTLTLSNTGYTASSVVYEILTCTAVTVDLSGNLAVPMSGGLPRVFYPESQLVGSGICSM</sequence>
<organism>
    <name type="scientific">Lipomyces kononenkoae</name>
    <name type="common">Yeast</name>
    <dbReference type="NCBI Taxonomy" id="34357"/>
    <lineage>
        <taxon>Eukaryota</taxon>
        <taxon>Fungi</taxon>
        <taxon>Dikarya</taxon>
        <taxon>Ascomycota</taxon>
        <taxon>Saccharomycotina</taxon>
        <taxon>Lipomycetes</taxon>
        <taxon>Lipomycetales</taxon>
        <taxon>Lipomycetaceae</taxon>
        <taxon>Lipomyces</taxon>
    </lineage>
</organism>
<name>AMY1_LIPKO</name>
<accession>Q01117</accession>
<feature type="signal peptide" evidence="6">
    <location>
        <begin position="1"/>
        <end position="28"/>
    </location>
</feature>
<feature type="chain" id="PRO_0000001354" description="Alpha-amylase 1">
    <location>
        <begin position="29"/>
        <end position="624"/>
    </location>
</feature>
<feature type="domain" description="CBM21" evidence="4">
    <location>
        <begin position="40"/>
        <end position="133"/>
    </location>
</feature>
<feature type="active site" description="Nucleophile" evidence="2">
    <location>
        <position position="353"/>
    </location>
</feature>
<feature type="active site" description="Proton donor" evidence="2">
    <location>
        <position position="377"/>
    </location>
</feature>
<feature type="binding site" evidence="1">
    <location>
        <position position="230"/>
    </location>
    <ligand>
        <name>substrate</name>
    </ligand>
</feature>
<feature type="binding site" evidence="1">
    <location>
        <position position="268"/>
    </location>
    <ligand>
        <name>Ca(2+)</name>
        <dbReference type="ChEBI" id="CHEBI:29108"/>
        <label>1</label>
    </ligand>
</feature>
<feature type="binding site" evidence="1">
    <location>
        <position position="269"/>
    </location>
    <ligand>
        <name>substrate</name>
    </ligand>
</feature>
<feature type="binding site" evidence="2">
    <location>
        <position position="309"/>
    </location>
    <ligand>
        <name>Ca(2+)</name>
        <dbReference type="ChEBI" id="CHEBI:29108"/>
        <label>1</label>
    </ligand>
</feature>
<feature type="binding site" evidence="2">
    <location>
        <position position="322"/>
    </location>
    <ligand>
        <name>Ca(2+)</name>
        <dbReference type="ChEBI" id="CHEBI:29108"/>
        <label>1</label>
    </ligand>
</feature>
<feature type="binding site" evidence="1">
    <location>
        <position position="351"/>
    </location>
    <ligand>
        <name>substrate</name>
    </ligand>
</feature>
<feature type="binding site" evidence="1">
    <location>
        <position position="353"/>
    </location>
    <ligand>
        <name>Ca(2+)</name>
        <dbReference type="ChEBI" id="CHEBI:29108"/>
        <label>2</label>
    </ligand>
</feature>
<feature type="binding site" evidence="1">
    <location>
        <begin position="356"/>
        <end position="357"/>
    </location>
    <ligand>
        <name>substrate</name>
    </ligand>
</feature>
<feature type="binding site" evidence="1">
    <location>
        <position position="357"/>
    </location>
    <ligand>
        <name>Ca(2+)</name>
        <dbReference type="ChEBI" id="CHEBI:29108"/>
        <label>1</label>
    </ligand>
</feature>
<feature type="binding site" evidence="1">
    <location>
        <position position="377"/>
    </location>
    <ligand>
        <name>Ca(2+)</name>
        <dbReference type="ChEBI" id="CHEBI:29108"/>
        <label>2</label>
    </ligand>
</feature>
<feature type="binding site" evidence="1">
    <location>
        <position position="381"/>
    </location>
    <ligand>
        <name>substrate</name>
    </ligand>
</feature>
<feature type="binding site" evidence="1">
    <location>
        <position position="444"/>
    </location>
    <ligand>
        <name>substrate</name>
    </ligand>
</feature>
<feature type="binding site" evidence="1">
    <location>
        <position position="491"/>
    </location>
    <ligand>
        <name>substrate</name>
    </ligand>
</feature>
<feature type="site" description="Transition state stabilizer" evidence="1">
    <location>
        <position position="444"/>
    </location>
</feature>
<feature type="glycosylation site" description="N-linked (GlcNAc...) asparagine" evidence="3">
    <location>
        <position position="304"/>
    </location>
</feature>
<feature type="glycosylation site" description="N-linked (GlcNAc...) asparagine" evidence="3">
    <location>
        <position position="344"/>
    </location>
</feature>
<feature type="disulfide bond" evidence="2">
    <location>
        <begin position="177"/>
        <end position="185"/>
    </location>
</feature>
<feature type="disulfide bond" evidence="2">
    <location>
        <begin position="297"/>
        <end position="311"/>
    </location>
</feature>
<feature type="disulfide bond" evidence="2">
    <location>
        <begin position="387"/>
        <end position="430"/>
    </location>
</feature>
<feature type="disulfide bond" evidence="2">
    <location>
        <begin position="587"/>
        <end position="622"/>
    </location>
</feature>
<reference key="1">
    <citation type="journal article" date="1995" name="Gene">
        <title>Cloning, sequence analysis and expression in yeasts of a cDNA containing a Lipomyces kononenkoae alpha-amylase-encoding gene.</title>
        <authorList>
            <person name="Steyn A.J.C."/>
            <person name="Marmur J."/>
            <person name="Pretorius I.S."/>
        </authorList>
    </citation>
    <scope>NUCLEOTIDE SEQUENCE [MRNA]</scope>
    <scope>CATALYTIC ACTIVITY</scope>
    <scope>SUBCELLULAR LOCATION</scope>
    <source>
        <strain>IGC4052B</strain>
    </source>
</reference>
<reference key="2">
    <citation type="journal article" date="1995" name="Curr. Genet.">
        <title>Characterization of a novel alpha-amylase from Lipomyces kononenkoae and expression of its gene (LKA1) in Saccharomyces cerevisiae.</title>
        <authorList>
            <person name="Steyn A.J.C."/>
            <person name="Pretorius I.S."/>
        </authorList>
    </citation>
    <scope>PROTEIN SEQUENCE OF 29-44</scope>
    <scope>CATALYTIC ACTIVITY</scope>
    <scope>SUBCELLULAR LOCATION</scope>
    <source>
        <strain>IGC4052B</strain>
    </source>
</reference>
<proteinExistence type="evidence at protein level"/>
<protein>
    <recommendedName>
        <fullName>Alpha-amylase 1</fullName>
        <ecNumber evidence="5 6">3.2.1.1</ecNumber>
    </recommendedName>
    <alternativeName>
        <fullName>1,4-alpha-D-glucan glucanohydrolase 1</fullName>
    </alternativeName>
</protein>
<evidence type="ECO:0000250" key="1">
    <source>
        <dbReference type="UniProtKB" id="P0C1B3"/>
    </source>
</evidence>
<evidence type="ECO:0000250" key="2">
    <source>
        <dbReference type="UniProtKB" id="P56271"/>
    </source>
</evidence>
<evidence type="ECO:0000255" key="3"/>
<evidence type="ECO:0000255" key="4">
    <source>
        <dbReference type="PROSITE-ProRule" id="PRU00491"/>
    </source>
</evidence>
<evidence type="ECO:0000269" key="5">
    <source>
    </source>
</evidence>
<evidence type="ECO:0000269" key="6">
    <source>
    </source>
</evidence>
<evidence type="ECO:0000305" key="7"/>
<gene>
    <name type="primary">LKA1</name>
</gene>